<keyword id="KW-0025">Alternative splicing</keyword>
<keyword id="KW-0963">Cytoplasm</keyword>
<keyword id="KW-0256">Endoplasmic reticulum</keyword>
<keyword id="KW-0378">Hydrolase</keyword>
<keyword id="KW-0443">Lipid metabolism</keyword>
<keyword id="KW-0472">Membrane</keyword>
<keyword id="KW-0479">Metal-binding</keyword>
<keyword id="KW-1267">Proteomics identification</keyword>
<keyword id="KW-1185">Reference proteome</keyword>
<keyword id="KW-0812">Transmembrane</keyword>
<keyword id="KW-1133">Transmembrane helix</keyword>
<proteinExistence type="evidence at protein level"/>
<gene>
    <name evidence="12" type="primary">GDPD1</name>
    <name evidence="9" type="synonym">GDE4</name>
</gene>
<dbReference type="EC" id="3.1.4.-" evidence="5 6"/>
<dbReference type="EMBL" id="AY271346">
    <property type="protein sequence ID" value="AAQ01751.1"/>
    <property type="molecule type" value="mRNA"/>
</dbReference>
<dbReference type="EMBL" id="EU192951">
    <property type="protein sequence ID" value="ABW73991.1"/>
    <property type="molecule type" value="mRNA"/>
</dbReference>
<dbReference type="EMBL" id="AK094770">
    <property type="protein sequence ID" value="BAC04419.1"/>
    <property type="molecule type" value="mRNA"/>
</dbReference>
<dbReference type="EMBL" id="AC091059">
    <property type="status" value="NOT_ANNOTATED_CDS"/>
    <property type="molecule type" value="Genomic_DNA"/>
</dbReference>
<dbReference type="EMBL" id="AC099850">
    <property type="status" value="NOT_ANNOTATED_CDS"/>
    <property type="molecule type" value="Genomic_DNA"/>
</dbReference>
<dbReference type="EMBL" id="CH471109">
    <property type="protein sequence ID" value="EAW94412.1"/>
    <property type="molecule type" value="Genomic_DNA"/>
</dbReference>
<dbReference type="EMBL" id="BC034432">
    <property type="protein sequence ID" value="AAH34432.1"/>
    <property type="molecule type" value="mRNA"/>
</dbReference>
<dbReference type="CCDS" id="CCDS11616.1">
    <molecule id="Q8N9F7-1"/>
</dbReference>
<dbReference type="CCDS" id="CCDS58583.1">
    <molecule id="Q8N9F7-3"/>
</dbReference>
<dbReference type="CCDS" id="CCDS58584.1">
    <molecule id="Q8N9F7-2"/>
</dbReference>
<dbReference type="RefSeq" id="NP_001159465.1">
    <molecule id="Q8N9F7-3"/>
    <property type="nucleotide sequence ID" value="NM_001165993.2"/>
</dbReference>
<dbReference type="RefSeq" id="NP_001159466.1">
    <molecule id="Q8N9F7-2"/>
    <property type="nucleotide sequence ID" value="NM_001165994.2"/>
</dbReference>
<dbReference type="RefSeq" id="NP_872375.2">
    <molecule id="Q8N9F7-1"/>
    <property type="nucleotide sequence ID" value="NM_182569.4"/>
</dbReference>
<dbReference type="SMR" id="Q8N9F7"/>
<dbReference type="BioGRID" id="129776">
    <property type="interactions" value="42"/>
</dbReference>
<dbReference type="FunCoup" id="Q8N9F7">
    <property type="interactions" value="679"/>
</dbReference>
<dbReference type="IntAct" id="Q8N9F7">
    <property type="interactions" value="36"/>
</dbReference>
<dbReference type="STRING" id="9606.ENSP00000284116"/>
<dbReference type="SwissLipids" id="SLP:000001718"/>
<dbReference type="GlyGen" id="Q8N9F7">
    <property type="glycosylation" value="1 site, 1 N-linked glycan (1 site)"/>
</dbReference>
<dbReference type="iPTMnet" id="Q8N9F7"/>
<dbReference type="PhosphoSitePlus" id="Q8N9F7"/>
<dbReference type="SwissPalm" id="Q8N9F7"/>
<dbReference type="BioMuta" id="GDPD1"/>
<dbReference type="DMDM" id="115502208"/>
<dbReference type="jPOST" id="Q8N9F7"/>
<dbReference type="MassIVE" id="Q8N9F7"/>
<dbReference type="PaxDb" id="9606-ENSP00000284116"/>
<dbReference type="PeptideAtlas" id="Q8N9F7"/>
<dbReference type="ProteomicsDB" id="72526">
    <molecule id="Q8N9F7-1"/>
</dbReference>
<dbReference type="ProteomicsDB" id="72527">
    <molecule id="Q8N9F7-2"/>
</dbReference>
<dbReference type="ProteomicsDB" id="72528">
    <molecule id="Q8N9F7-3"/>
</dbReference>
<dbReference type="Pumba" id="Q8N9F7"/>
<dbReference type="TopDownProteomics" id="Q8N9F7-2">
    <molecule id="Q8N9F7-2"/>
</dbReference>
<dbReference type="Antibodypedia" id="66215">
    <property type="antibodies" value="110 antibodies from 15 providers"/>
</dbReference>
<dbReference type="DNASU" id="284161"/>
<dbReference type="Ensembl" id="ENST00000284116.9">
    <molecule id="Q8N9F7-1"/>
    <property type="protein sequence ID" value="ENSP00000284116.4"/>
    <property type="gene ID" value="ENSG00000153982.11"/>
</dbReference>
<dbReference type="Ensembl" id="ENST00000581140.5">
    <molecule id="Q8N9F7-3"/>
    <property type="protein sequence ID" value="ENSP00000463273.1"/>
    <property type="gene ID" value="ENSG00000153982.11"/>
</dbReference>
<dbReference type="Ensembl" id="ENST00000581276.5">
    <molecule id="Q8N9F7-2"/>
    <property type="protein sequence ID" value="ENSP00000464690.1"/>
    <property type="gene ID" value="ENSG00000153982.11"/>
</dbReference>
<dbReference type="GeneID" id="284161"/>
<dbReference type="KEGG" id="hsa:284161"/>
<dbReference type="MANE-Select" id="ENST00000284116.9">
    <property type="protein sequence ID" value="ENSP00000284116.4"/>
    <property type="RefSeq nucleotide sequence ID" value="NM_182569.4"/>
    <property type="RefSeq protein sequence ID" value="NP_872375.2"/>
</dbReference>
<dbReference type="UCSC" id="uc002ixj.4">
    <molecule id="Q8N9F7-1"/>
    <property type="organism name" value="human"/>
</dbReference>
<dbReference type="AGR" id="HGNC:20883"/>
<dbReference type="CTD" id="284161"/>
<dbReference type="DisGeNET" id="284161"/>
<dbReference type="GeneCards" id="GDPD1"/>
<dbReference type="HGNC" id="HGNC:20883">
    <property type="gene designation" value="GDPD1"/>
</dbReference>
<dbReference type="HPA" id="ENSG00000153982">
    <property type="expression patterns" value="Tissue enhanced (brain)"/>
</dbReference>
<dbReference type="MIM" id="616317">
    <property type="type" value="gene"/>
</dbReference>
<dbReference type="neXtProt" id="NX_Q8N9F7"/>
<dbReference type="OpenTargets" id="ENSG00000153982"/>
<dbReference type="PharmGKB" id="PA134879258"/>
<dbReference type="VEuPathDB" id="HostDB:ENSG00000153982"/>
<dbReference type="eggNOG" id="KOG2258">
    <property type="taxonomic scope" value="Eukaryota"/>
</dbReference>
<dbReference type="GeneTree" id="ENSGT00940000156673"/>
<dbReference type="HOGENOM" id="CLU_030006_5_0_1"/>
<dbReference type="InParanoid" id="Q8N9F7"/>
<dbReference type="OMA" id="VHVWTID"/>
<dbReference type="OrthoDB" id="1058301at2759"/>
<dbReference type="PAN-GO" id="Q8N9F7">
    <property type="GO annotations" value="5 GO annotations based on evolutionary models"/>
</dbReference>
<dbReference type="PhylomeDB" id="Q8N9F7"/>
<dbReference type="TreeFam" id="TF328545"/>
<dbReference type="BRENDA" id="3.1.4.46">
    <property type="organism ID" value="2681"/>
</dbReference>
<dbReference type="PathwayCommons" id="Q8N9F7"/>
<dbReference type="Reactome" id="R-HSA-6814848">
    <property type="pathway name" value="Glycerophospholipid catabolism"/>
</dbReference>
<dbReference type="SignaLink" id="Q8N9F7"/>
<dbReference type="BioGRID-ORCS" id="284161">
    <property type="hits" value="7 hits in 1156 CRISPR screens"/>
</dbReference>
<dbReference type="ChiTaRS" id="GDPD1">
    <property type="organism name" value="human"/>
</dbReference>
<dbReference type="GenomeRNAi" id="284161"/>
<dbReference type="Pharos" id="Q8N9F7">
    <property type="development level" value="Tbio"/>
</dbReference>
<dbReference type="PRO" id="PR:Q8N9F7"/>
<dbReference type="Proteomes" id="UP000005640">
    <property type="component" value="Chromosome 17"/>
</dbReference>
<dbReference type="RNAct" id="Q8N9F7">
    <property type="molecule type" value="protein"/>
</dbReference>
<dbReference type="Bgee" id="ENSG00000153982">
    <property type="expression patterns" value="Expressed in Brodmann (1909) area 23 and 151 other cell types or tissues"/>
</dbReference>
<dbReference type="ExpressionAtlas" id="Q8N9F7">
    <property type="expression patterns" value="baseline and differential"/>
</dbReference>
<dbReference type="GO" id="GO:0005783">
    <property type="term" value="C:endoplasmic reticulum"/>
    <property type="evidence" value="ECO:0000315"/>
    <property type="project" value="UniProtKB"/>
</dbReference>
<dbReference type="GO" id="GO:0005789">
    <property type="term" value="C:endoplasmic reticulum membrane"/>
    <property type="evidence" value="ECO:0000318"/>
    <property type="project" value="GO_Central"/>
</dbReference>
<dbReference type="GO" id="GO:0016020">
    <property type="term" value="C:membrane"/>
    <property type="evidence" value="ECO:0007005"/>
    <property type="project" value="UniProtKB"/>
</dbReference>
<dbReference type="GO" id="GO:0048471">
    <property type="term" value="C:perinuclear region of cytoplasm"/>
    <property type="evidence" value="ECO:0000250"/>
    <property type="project" value="UniProtKB"/>
</dbReference>
<dbReference type="GO" id="GO:0004622">
    <property type="term" value="F:lysophospholipase activity"/>
    <property type="evidence" value="ECO:0000315"/>
    <property type="project" value="MGI"/>
</dbReference>
<dbReference type="GO" id="GO:0046872">
    <property type="term" value="F:metal ion binding"/>
    <property type="evidence" value="ECO:0007669"/>
    <property type="project" value="UniProtKB-KW"/>
</dbReference>
<dbReference type="GO" id="GO:0008081">
    <property type="term" value="F:phosphoric diester hydrolase activity"/>
    <property type="evidence" value="ECO:0000315"/>
    <property type="project" value="UniProtKB"/>
</dbReference>
<dbReference type="GO" id="GO:0046475">
    <property type="term" value="P:glycerophospholipid catabolic process"/>
    <property type="evidence" value="ECO:0000318"/>
    <property type="project" value="GO_Central"/>
</dbReference>
<dbReference type="GO" id="GO:0070291">
    <property type="term" value="P:N-acylethanolamine metabolic process"/>
    <property type="evidence" value="ECO:0000315"/>
    <property type="project" value="UniProtKB"/>
</dbReference>
<dbReference type="CDD" id="cd08612">
    <property type="entry name" value="GDPD_GDE4"/>
    <property type="match status" value="1"/>
</dbReference>
<dbReference type="Gene3D" id="3.20.20.190">
    <property type="entry name" value="Phosphatidylinositol (PI) phosphodiesterase"/>
    <property type="match status" value="1"/>
</dbReference>
<dbReference type="InterPro" id="IPR052271">
    <property type="entry name" value="GDPD-Related"/>
</dbReference>
<dbReference type="InterPro" id="IPR030395">
    <property type="entry name" value="GP_PDE_dom"/>
</dbReference>
<dbReference type="InterPro" id="IPR017946">
    <property type="entry name" value="PLC-like_Pdiesterase_TIM-brl"/>
</dbReference>
<dbReference type="PANTHER" id="PTHR42758:SF1">
    <property type="entry name" value="LYSOPHOSPHOLIPASE D GDPD1"/>
    <property type="match status" value="1"/>
</dbReference>
<dbReference type="PANTHER" id="PTHR42758">
    <property type="entry name" value="PHOSPHATIDYLGLYCEROL PHOSPHOLIPASE C"/>
    <property type="match status" value="1"/>
</dbReference>
<dbReference type="Pfam" id="PF03009">
    <property type="entry name" value="GDPD"/>
    <property type="match status" value="1"/>
</dbReference>
<dbReference type="SUPFAM" id="SSF51695">
    <property type="entry name" value="PLC-like phosphodiesterases"/>
    <property type="match status" value="1"/>
</dbReference>
<dbReference type="PROSITE" id="PS51704">
    <property type="entry name" value="GP_PDE"/>
    <property type="match status" value="1"/>
</dbReference>
<protein>
    <recommendedName>
        <fullName evidence="10">Lysophospholipase D GDPD1</fullName>
        <ecNumber evidence="5 6">3.1.4.-</ecNumber>
    </recommendedName>
    <alternativeName>
        <fullName evidence="9">Glycerophosphodiester phosphodiesterase 4</fullName>
    </alternativeName>
    <alternativeName>
        <fullName>Glycerophosphodiester phosphodiesterase domain-containing protein 1</fullName>
    </alternativeName>
</protein>
<organism>
    <name type="scientific">Homo sapiens</name>
    <name type="common">Human</name>
    <dbReference type="NCBI Taxonomy" id="9606"/>
    <lineage>
        <taxon>Eukaryota</taxon>
        <taxon>Metazoa</taxon>
        <taxon>Chordata</taxon>
        <taxon>Craniata</taxon>
        <taxon>Vertebrata</taxon>
        <taxon>Euteleostomi</taxon>
        <taxon>Mammalia</taxon>
        <taxon>Eutheria</taxon>
        <taxon>Euarchontoglires</taxon>
        <taxon>Primates</taxon>
        <taxon>Haplorrhini</taxon>
        <taxon>Catarrhini</taxon>
        <taxon>Hominidae</taxon>
        <taxon>Homo</taxon>
    </lineage>
</organism>
<evidence type="ECO:0000250" key="1">
    <source>
        <dbReference type="UniProtKB" id="Q9CRY7"/>
    </source>
</evidence>
<evidence type="ECO:0000255" key="2"/>
<evidence type="ECO:0000269" key="3">
    <source>
    </source>
</evidence>
<evidence type="ECO:0000269" key="4">
    <source>
    </source>
</evidence>
<evidence type="ECO:0000269" key="5">
    <source>
    </source>
</evidence>
<evidence type="ECO:0000269" key="6">
    <source>
    </source>
</evidence>
<evidence type="ECO:0000303" key="7">
    <source>
    </source>
</evidence>
<evidence type="ECO:0000303" key="8">
    <source>
    </source>
</evidence>
<evidence type="ECO:0000303" key="9">
    <source>
    </source>
</evidence>
<evidence type="ECO:0000305" key="10"/>
<evidence type="ECO:0000305" key="11">
    <source>
    </source>
</evidence>
<evidence type="ECO:0000312" key="12">
    <source>
        <dbReference type="HGNC" id="HGNC:20883"/>
    </source>
</evidence>
<feature type="chain" id="PRO_0000251931" description="Lysophospholipase D GDPD1">
    <location>
        <begin position="1"/>
        <end position="314"/>
    </location>
</feature>
<feature type="topological domain" description="Extracellular" evidence="2">
    <location>
        <begin position="1"/>
        <end position="3"/>
    </location>
</feature>
<feature type="transmembrane region" description="Helical" evidence="2">
    <location>
        <begin position="4"/>
        <end position="24"/>
    </location>
</feature>
<feature type="topological domain" description="Cytoplasmic" evidence="2">
    <location>
        <begin position="25"/>
        <end position="195"/>
    </location>
</feature>
<feature type="transmembrane region" description="Helical" evidence="2">
    <location>
        <begin position="196"/>
        <end position="216"/>
    </location>
</feature>
<feature type="topological domain" description="Extracellular" evidence="2">
    <location>
        <begin position="217"/>
        <end position="314"/>
    </location>
</feature>
<feature type="domain" description="GP-PDE">
    <location>
        <begin position="40"/>
        <end position="309"/>
    </location>
</feature>
<feature type="binding site" evidence="2">
    <location>
        <position position="72"/>
    </location>
    <ligand>
        <name>a divalent metal cation</name>
        <dbReference type="ChEBI" id="CHEBI:60240"/>
    </ligand>
</feature>
<feature type="binding site" evidence="2">
    <location>
        <position position="74"/>
    </location>
    <ligand>
        <name>a divalent metal cation</name>
        <dbReference type="ChEBI" id="CHEBI:60240"/>
    </ligand>
</feature>
<feature type="binding site" evidence="2">
    <location>
        <position position="87"/>
    </location>
    <ligand>
        <name>a divalent metal cation</name>
        <dbReference type="ChEBI" id="CHEBI:60240"/>
    </ligand>
</feature>
<feature type="splice variant" id="VSP_020806" description="In isoform 3." evidence="8">
    <original>DHLTARGIQVYIWVLNEEQEYKRAFDLGATGVMTDYPTKLRDFLHNFSA</original>
    <variation>EPLHPASKRNFEGHCSYLVVSCYF</variation>
    <location>
        <begin position="266"/>
        <end position="314"/>
    </location>
</feature>
<feature type="splice variant" id="VSP_020807" description="In isoform 2." evidence="7">
    <original>YIWVLNEEQEYKRAF</original>
    <variation>SFWNDAFWKQHSSPV</variation>
    <location>
        <begin position="276"/>
        <end position="290"/>
    </location>
</feature>
<feature type="splice variant" id="VSP_020808" description="In isoform 2." evidence="7">
    <location>
        <begin position="291"/>
        <end position="314"/>
    </location>
</feature>
<feature type="sequence conflict" description="In Ref. 3; BAC04419." evidence="10" ref="3">
    <original>M</original>
    <variation>T</variation>
    <location>
        <position position="70"/>
    </location>
</feature>
<sequence length="314" mass="36167">MSSTAAFYLLSTLGGYLVTSFLLLKYPTLLHQRKKQRFLSKHISHRGGAGENLENTMAAFQHAVKIGTDMLELDCHITKDEQVVVSHDENLKRATGVNVNISDLKYCELPPYLGKLDVSFQRACQCEGKDNRIPLLKEVFEAFPNTPINIDIKVNNNVLIKKVSELVKRYNREHLTVWGNANYEIVEKCYKENSDIPILFSLQRVLLILGLFFTGLLPFVPIREQFFEIPMPSIILKLKEPHTMSRSQKFLIWLSDLLLMRKALFDHLTARGIQVYIWVLNEEQEYKRAFDLGATGVMTDYPTKLRDFLHNFSA</sequence>
<accession>Q8N9F7</accession>
<accession>A8W735</accession>
<accession>Q56VR1</accession>
<accession>Q8N4E3</accession>
<reference key="1">
    <citation type="journal article" date="2005" name="DNA Seq.">
        <title>A novel splice variant of human gene NPL, mainly expressed in human liver, kidney and peripheral blood leukocyte.</title>
        <authorList>
            <person name="Wu M."/>
            <person name="Gu S."/>
            <person name="Xu J."/>
            <person name="Zou X."/>
            <person name="Zheng H."/>
            <person name="Jin Z."/>
            <person name="Xie Y."/>
            <person name="Ji C."/>
            <person name="Mao Y."/>
        </authorList>
    </citation>
    <scope>NUCLEOTIDE SEQUENCE [MRNA] (ISOFORM 3)</scope>
    <scope>TISSUE SPECIFICITY</scope>
    <source>
        <tissue>Fetal brain</tissue>
    </source>
</reference>
<reference key="2">
    <citation type="journal article" date="2008" name="Mol. Membr. Biol.">
        <title>Isolation, characterization and molecular 3D model of human GDE4, a novel membrane protein containing glycerophosphodiester phosphodiesterase domain.</title>
        <authorList>
            <person name="Chang P.A."/>
            <person name="Shao H.B."/>
            <person name="Long D.X."/>
            <person name="Sun Q."/>
            <person name="Wu Y.J."/>
        </authorList>
    </citation>
    <scope>NUCLEOTIDE SEQUENCE [MRNA] (ISOFORM 1)</scope>
    <scope>SUBCELLULAR LOCATION</scope>
    <scope>3D-STRUCTURE MODELING</scope>
</reference>
<reference key="3">
    <citation type="journal article" date="2004" name="Nat. Genet.">
        <title>Complete sequencing and characterization of 21,243 full-length human cDNAs.</title>
        <authorList>
            <person name="Ota T."/>
            <person name="Suzuki Y."/>
            <person name="Nishikawa T."/>
            <person name="Otsuki T."/>
            <person name="Sugiyama T."/>
            <person name="Irie R."/>
            <person name="Wakamatsu A."/>
            <person name="Hayashi K."/>
            <person name="Sato H."/>
            <person name="Nagai K."/>
            <person name="Kimura K."/>
            <person name="Makita H."/>
            <person name="Sekine M."/>
            <person name="Obayashi M."/>
            <person name="Nishi T."/>
            <person name="Shibahara T."/>
            <person name="Tanaka T."/>
            <person name="Ishii S."/>
            <person name="Yamamoto J."/>
            <person name="Saito K."/>
            <person name="Kawai Y."/>
            <person name="Isono Y."/>
            <person name="Nakamura Y."/>
            <person name="Nagahari K."/>
            <person name="Murakami K."/>
            <person name="Yasuda T."/>
            <person name="Iwayanagi T."/>
            <person name="Wagatsuma M."/>
            <person name="Shiratori A."/>
            <person name="Sudo H."/>
            <person name="Hosoiri T."/>
            <person name="Kaku Y."/>
            <person name="Kodaira H."/>
            <person name="Kondo H."/>
            <person name="Sugawara M."/>
            <person name="Takahashi M."/>
            <person name="Kanda K."/>
            <person name="Yokoi T."/>
            <person name="Furuya T."/>
            <person name="Kikkawa E."/>
            <person name="Omura Y."/>
            <person name="Abe K."/>
            <person name="Kamihara K."/>
            <person name="Katsuta N."/>
            <person name="Sato K."/>
            <person name="Tanikawa M."/>
            <person name="Yamazaki M."/>
            <person name="Ninomiya K."/>
            <person name="Ishibashi T."/>
            <person name="Yamashita H."/>
            <person name="Murakawa K."/>
            <person name="Fujimori K."/>
            <person name="Tanai H."/>
            <person name="Kimata M."/>
            <person name="Watanabe M."/>
            <person name="Hiraoka S."/>
            <person name="Chiba Y."/>
            <person name="Ishida S."/>
            <person name="Ono Y."/>
            <person name="Takiguchi S."/>
            <person name="Watanabe S."/>
            <person name="Yosida M."/>
            <person name="Hotuta T."/>
            <person name="Kusano J."/>
            <person name="Kanehori K."/>
            <person name="Takahashi-Fujii A."/>
            <person name="Hara H."/>
            <person name="Tanase T.-O."/>
            <person name="Nomura Y."/>
            <person name="Togiya S."/>
            <person name="Komai F."/>
            <person name="Hara R."/>
            <person name="Takeuchi K."/>
            <person name="Arita M."/>
            <person name="Imose N."/>
            <person name="Musashino K."/>
            <person name="Yuuki H."/>
            <person name="Oshima A."/>
            <person name="Sasaki N."/>
            <person name="Aotsuka S."/>
            <person name="Yoshikawa Y."/>
            <person name="Matsunawa H."/>
            <person name="Ichihara T."/>
            <person name="Shiohata N."/>
            <person name="Sano S."/>
            <person name="Moriya S."/>
            <person name="Momiyama H."/>
            <person name="Satoh N."/>
            <person name="Takami S."/>
            <person name="Terashima Y."/>
            <person name="Suzuki O."/>
            <person name="Nakagawa S."/>
            <person name="Senoh A."/>
            <person name="Mizoguchi H."/>
            <person name="Goto Y."/>
            <person name="Shimizu F."/>
            <person name="Wakebe H."/>
            <person name="Hishigaki H."/>
            <person name="Watanabe T."/>
            <person name="Sugiyama A."/>
            <person name="Takemoto M."/>
            <person name="Kawakami B."/>
            <person name="Yamazaki M."/>
            <person name="Watanabe K."/>
            <person name="Kumagai A."/>
            <person name="Itakura S."/>
            <person name="Fukuzumi Y."/>
            <person name="Fujimori Y."/>
            <person name="Komiyama M."/>
            <person name="Tashiro H."/>
            <person name="Tanigami A."/>
            <person name="Fujiwara T."/>
            <person name="Ono T."/>
            <person name="Yamada K."/>
            <person name="Fujii Y."/>
            <person name="Ozaki K."/>
            <person name="Hirao M."/>
            <person name="Ohmori Y."/>
            <person name="Kawabata A."/>
            <person name="Hikiji T."/>
            <person name="Kobatake N."/>
            <person name="Inagaki H."/>
            <person name="Ikema Y."/>
            <person name="Okamoto S."/>
            <person name="Okitani R."/>
            <person name="Kawakami T."/>
            <person name="Noguchi S."/>
            <person name="Itoh T."/>
            <person name="Shigeta K."/>
            <person name="Senba T."/>
            <person name="Matsumura K."/>
            <person name="Nakajima Y."/>
            <person name="Mizuno T."/>
            <person name="Morinaga M."/>
            <person name="Sasaki M."/>
            <person name="Togashi T."/>
            <person name="Oyama M."/>
            <person name="Hata H."/>
            <person name="Watanabe M."/>
            <person name="Komatsu T."/>
            <person name="Mizushima-Sugano J."/>
            <person name="Satoh T."/>
            <person name="Shirai Y."/>
            <person name="Takahashi Y."/>
            <person name="Nakagawa K."/>
            <person name="Okumura K."/>
            <person name="Nagase T."/>
            <person name="Nomura N."/>
            <person name="Kikuchi H."/>
            <person name="Masuho Y."/>
            <person name="Yamashita R."/>
            <person name="Nakai K."/>
            <person name="Yada T."/>
            <person name="Nakamura Y."/>
            <person name="Ohara O."/>
            <person name="Isogai T."/>
            <person name="Sugano S."/>
        </authorList>
    </citation>
    <scope>NUCLEOTIDE SEQUENCE [LARGE SCALE MRNA] (ISOFORM 1)</scope>
    <source>
        <tissue>Brain</tissue>
    </source>
</reference>
<reference key="4">
    <citation type="journal article" date="2006" name="Nature">
        <title>DNA sequence of human chromosome 17 and analysis of rearrangement in the human lineage.</title>
        <authorList>
            <person name="Zody M.C."/>
            <person name="Garber M."/>
            <person name="Adams D.J."/>
            <person name="Sharpe T."/>
            <person name="Harrow J."/>
            <person name="Lupski J.R."/>
            <person name="Nicholson C."/>
            <person name="Searle S.M."/>
            <person name="Wilming L."/>
            <person name="Young S.K."/>
            <person name="Abouelleil A."/>
            <person name="Allen N.R."/>
            <person name="Bi W."/>
            <person name="Bloom T."/>
            <person name="Borowsky M.L."/>
            <person name="Bugalter B.E."/>
            <person name="Butler J."/>
            <person name="Chang J.L."/>
            <person name="Chen C.-K."/>
            <person name="Cook A."/>
            <person name="Corum B."/>
            <person name="Cuomo C.A."/>
            <person name="de Jong P.J."/>
            <person name="DeCaprio D."/>
            <person name="Dewar K."/>
            <person name="FitzGerald M."/>
            <person name="Gilbert J."/>
            <person name="Gibson R."/>
            <person name="Gnerre S."/>
            <person name="Goldstein S."/>
            <person name="Grafham D.V."/>
            <person name="Grocock R."/>
            <person name="Hafez N."/>
            <person name="Hagopian D.S."/>
            <person name="Hart E."/>
            <person name="Norman C.H."/>
            <person name="Humphray S."/>
            <person name="Jaffe D.B."/>
            <person name="Jones M."/>
            <person name="Kamal M."/>
            <person name="Khodiyar V.K."/>
            <person name="LaButti K."/>
            <person name="Laird G."/>
            <person name="Lehoczky J."/>
            <person name="Liu X."/>
            <person name="Lokyitsang T."/>
            <person name="Loveland J."/>
            <person name="Lui A."/>
            <person name="Macdonald P."/>
            <person name="Major J.E."/>
            <person name="Matthews L."/>
            <person name="Mauceli E."/>
            <person name="McCarroll S.A."/>
            <person name="Mihalev A.H."/>
            <person name="Mudge J."/>
            <person name="Nguyen C."/>
            <person name="Nicol R."/>
            <person name="O'Leary S.B."/>
            <person name="Osoegawa K."/>
            <person name="Schwartz D.C."/>
            <person name="Shaw-Smith C."/>
            <person name="Stankiewicz P."/>
            <person name="Steward C."/>
            <person name="Swarbreck D."/>
            <person name="Venkataraman V."/>
            <person name="Whittaker C.A."/>
            <person name="Yang X."/>
            <person name="Zimmer A.R."/>
            <person name="Bradley A."/>
            <person name="Hubbard T."/>
            <person name="Birren B.W."/>
            <person name="Rogers J."/>
            <person name="Lander E.S."/>
            <person name="Nusbaum C."/>
        </authorList>
    </citation>
    <scope>NUCLEOTIDE SEQUENCE [LARGE SCALE GENOMIC DNA]</scope>
</reference>
<reference key="5">
    <citation type="submission" date="2005-09" db="EMBL/GenBank/DDBJ databases">
        <authorList>
            <person name="Mural R.J."/>
            <person name="Istrail S."/>
            <person name="Sutton G.G."/>
            <person name="Florea L."/>
            <person name="Halpern A.L."/>
            <person name="Mobarry C.M."/>
            <person name="Lippert R."/>
            <person name="Walenz B."/>
            <person name="Shatkay H."/>
            <person name="Dew I."/>
            <person name="Miller J.R."/>
            <person name="Flanigan M.J."/>
            <person name="Edwards N.J."/>
            <person name="Bolanos R."/>
            <person name="Fasulo D."/>
            <person name="Halldorsson B.V."/>
            <person name="Hannenhalli S."/>
            <person name="Turner R."/>
            <person name="Yooseph S."/>
            <person name="Lu F."/>
            <person name="Nusskern D.R."/>
            <person name="Shue B.C."/>
            <person name="Zheng X.H."/>
            <person name="Zhong F."/>
            <person name="Delcher A.L."/>
            <person name="Huson D.H."/>
            <person name="Kravitz S.A."/>
            <person name="Mouchard L."/>
            <person name="Reinert K."/>
            <person name="Remington K.A."/>
            <person name="Clark A.G."/>
            <person name="Waterman M.S."/>
            <person name="Eichler E.E."/>
            <person name="Adams M.D."/>
            <person name="Hunkapiller M.W."/>
            <person name="Myers E.W."/>
            <person name="Venter J.C."/>
        </authorList>
    </citation>
    <scope>NUCLEOTIDE SEQUENCE [LARGE SCALE GENOMIC DNA]</scope>
</reference>
<reference key="6">
    <citation type="journal article" date="2004" name="Genome Res.">
        <title>The status, quality, and expansion of the NIH full-length cDNA project: the Mammalian Gene Collection (MGC).</title>
        <authorList>
            <consortium name="The MGC Project Team"/>
        </authorList>
    </citation>
    <scope>NUCLEOTIDE SEQUENCE [LARGE SCALE MRNA] (ISOFORM 2)</scope>
    <source>
        <tissue>Brain</tissue>
    </source>
</reference>
<reference key="7">
    <citation type="journal article" date="2011" name="BMC Syst. Biol.">
        <title>Initial characterization of the human central proteome.</title>
        <authorList>
            <person name="Burkard T.R."/>
            <person name="Planyavsky M."/>
            <person name="Kaupe I."/>
            <person name="Breitwieser F.P."/>
            <person name="Buerckstuemmer T."/>
            <person name="Bennett K.L."/>
            <person name="Superti-Furga G."/>
            <person name="Colinge J."/>
        </authorList>
    </citation>
    <scope>IDENTIFICATION BY MASS SPECTROMETRY [LARGE SCALE ANALYSIS]</scope>
</reference>
<reference key="8">
    <citation type="journal article" date="2015" name="Biochim. Biophys. Acta">
        <title>Glycerophosphodiesterase GDE4 as a novel lysophospholipase D: a possible involvement in bioactive N-acylethanolamine biosynthesis.</title>
        <authorList>
            <person name="Tsuboi K."/>
            <person name="Okamoto Y."/>
            <person name="Rahman I.A."/>
            <person name="Uyama T."/>
            <person name="Inoue T."/>
            <person name="Tokumura A."/>
            <person name="Ueda N."/>
        </authorList>
    </citation>
    <scope>FUNCTION</scope>
    <scope>CATALYTIC ACTIVITY</scope>
</reference>
<reference key="9">
    <citation type="journal article" date="2016" name="Biochim. Biophys. Acta">
        <title>Calcium-dependent generation of N-acylethanolamines and lysophosphatidic acids by glycerophosphodiesterase GDE7.</title>
        <authorList>
            <person name="Rahman I.A."/>
            <person name="Tsuboi K."/>
            <person name="Hussain Z."/>
            <person name="Yamashita R."/>
            <person name="Okamoto Y."/>
            <person name="Uyama T."/>
            <person name="Yamazaki N."/>
            <person name="Tanaka T."/>
            <person name="Tokumura A."/>
            <person name="Ueda N."/>
        </authorList>
    </citation>
    <scope>FUNCTION</scope>
    <scope>CATALYTIC ACTIVITY</scope>
    <scope>SUBCELLULAR LOCATION</scope>
    <scope>ACTIVITY REGULATION</scope>
    <scope>TISSUE SPECIFICITY</scope>
</reference>
<name>GDPD1_HUMAN</name>
<comment type="function">
    <text evidence="1 5 6">Hydrolyzes lysoglycerophospholipids to produce lysophosphatidic acid (LPA) and the corresponding amines (PubMed:25596343, PubMed:27637550). Shows a preference for 1-O-alkyl-sn-glycero-3-phosphocholine (lyso-PAF), lysophosphatidylethanolamine (lyso-PE) and lysophosphatidylcholine (lyso-PC) (PubMed:25596343, PubMed:27637550). May be involved in bioactive N-acylethanolamine biosynthesis from both N-acyl-lysoplasmenylethanolamin (N-acyl-lysoPlsEt) and N-acyl-lysophosphatidylethanolamin (N-acyl-lysoPE) (PubMed:25596343, PubMed:27637550). In addition, hydrolyzes glycerophospho-N-acylethanolamine to N-acylethanolamine (PubMed:27637550). Does not display glycerophosphodiester phosphodiesterase activity, since it cannot hydrolyze either glycerophosphoinositol or glycerophosphocholine (By similarity).</text>
</comment>
<comment type="catalytic activity">
    <reaction evidence="1">
        <text>a 1-O-alkyl-sn-glycero-3-phosphocholine + H2O = a 1-O-alkyl-sn-glycero-3-phosphate + choline + H(+)</text>
        <dbReference type="Rhea" id="RHEA:39927"/>
        <dbReference type="ChEBI" id="CHEBI:15354"/>
        <dbReference type="ChEBI" id="CHEBI:15377"/>
        <dbReference type="ChEBI" id="CHEBI:15378"/>
        <dbReference type="ChEBI" id="CHEBI:30909"/>
        <dbReference type="ChEBI" id="CHEBI:58014"/>
    </reaction>
    <physiologicalReaction direction="left-to-right" evidence="1">
        <dbReference type="Rhea" id="RHEA:39928"/>
    </physiologicalReaction>
</comment>
<comment type="catalytic activity">
    <reaction evidence="1">
        <text>1-hexadecanoyl-sn-glycero-3-phosphocholine + H2O = 1-hexadecanoyl-sn-glycero-3-phosphate + choline + H(+)</text>
        <dbReference type="Rhea" id="RHEA:38975"/>
        <dbReference type="ChEBI" id="CHEBI:15354"/>
        <dbReference type="ChEBI" id="CHEBI:15377"/>
        <dbReference type="ChEBI" id="CHEBI:15378"/>
        <dbReference type="ChEBI" id="CHEBI:57518"/>
        <dbReference type="ChEBI" id="CHEBI:72998"/>
    </reaction>
    <physiologicalReaction direction="left-to-right" evidence="1">
        <dbReference type="Rhea" id="RHEA:38976"/>
    </physiologicalReaction>
</comment>
<comment type="catalytic activity">
    <reaction evidence="6">
        <text>N-hexadecanoyl-sn-glycero-3-phosphoethanolamine + H2O = N-hexadecanoylethanolamine + sn-glycerol 3-phosphate + H(+)</text>
        <dbReference type="Rhea" id="RHEA:45436"/>
        <dbReference type="ChEBI" id="CHEBI:15377"/>
        <dbReference type="ChEBI" id="CHEBI:15378"/>
        <dbReference type="ChEBI" id="CHEBI:57597"/>
        <dbReference type="ChEBI" id="CHEBI:71464"/>
        <dbReference type="ChEBI" id="CHEBI:85226"/>
    </reaction>
    <physiologicalReaction direction="left-to-right" evidence="11">
        <dbReference type="Rhea" id="RHEA:45437"/>
    </physiologicalReaction>
</comment>
<comment type="catalytic activity">
    <reaction evidence="6">
        <text>N-(5Z,8Z,11Z,14Z-eicosatetraenoyl)-1-(9Z-octadecenoyl)-sn-glycero-3-phosphoethanolamine + H2O = N-(5Z,8Z,11Z,14Z-eicosatetraenoyl)-ethanolamine + 1-(9Z-octadecenoyl)-sn-glycero-3-phosphate + H(+)</text>
        <dbReference type="Rhea" id="RHEA:45544"/>
        <dbReference type="ChEBI" id="CHEBI:2700"/>
        <dbReference type="ChEBI" id="CHEBI:15377"/>
        <dbReference type="ChEBI" id="CHEBI:15378"/>
        <dbReference type="ChEBI" id="CHEBI:74544"/>
        <dbReference type="ChEBI" id="CHEBI:85223"/>
    </reaction>
    <physiologicalReaction direction="left-to-right" evidence="11">
        <dbReference type="Rhea" id="RHEA:45545"/>
    </physiologicalReaction>
</comment>
<comment type="catalytic activity">
    <reaction evidence="6">
        <text>N,1-di-(9Z-octadecenoyl)-sn-glycero-3-phosphoethanolamine + H2O = N-(9Z-octadecenoyl) ethanolamine + 1-(9Z-octadecenoyl)-sn-glycero-3-phosphate + H(+)</text>
        <dbReference type="Rhea" id="RHEA:56460"/>
        <dbReference type="ChEBI" id="CHEBI:15377"/>
        <dbReference type="ChEBI" id="CHEBI:15378"/>
        <dbReference type="ChEBI" id="CHEBI:71466"/>
        <dbReference type="ChEBI" id="CHEBI:74544"/>
        <dbReference type="ChEBI" id="CHEBI:85222"/>
    </reaction>
    <physiologicalReaction direction="left-to-right" evidence="11">
        <dbReference type="Rhea" id="RHEA:56461"/>
    </physiologicalReaction>
</comment>
<comment type="catalytic activity">
    <reaction evidence="6">
        <text>N-hexadecanoyl-1-(9Z-octadecenoyl)-sn-glycero-3-phosphoethanolamine + H2O = N-hexadecanoylethanolamine + 1-(9Z-octadecenoyl)-sn-glycero-3-phosphate + H(+)</text>
        <dbReference type="Rhea" id="RHEA:53168"/>
        <dbReference type="ChEBI" id="CHEBI:15377"/>
        <dbReference type="ChEBI" id="CHEBI:15378"/>
        <dbReference type="ChEBI" id="CHEBI:71464"/>
        <dbReference type="ChEBI" id="CHEBI:74544"/>
        <dbReference type="ChEBI" id="CHEBI:85217"/>
    </reaction>
    <physiologicalReaction direction="left-to-right" evidence="6">
        <dbReference type="Rhea" id="RHEA:53169"/>
    </physiologicalReaction>
</comment>
<comment type="catalytic activity">
    <reaction evidence="5 6">
        <text>1-O-(1Z-octadecenyl)-sn-glycero-3-phospho-N-hexadecanoyl-ethanolamine + H2O = 1-O-(1Z-octadecenyl)-sn-glycero-3-phosphate + N-hexadecanoylethanolamine + H(+)</text>
        <dbReference type="Rhea" id="RHEA:53184"/>
        <dbReference type="ChEBI" id="CHEBI:15377"/>
        <dbReference type="ChEBI" id="CHEBI:15378"/>
        <dbReference type="ChEBI" id="CHEBI:71464"/>
        <dbReference type="ChEBI" id="CHEBI:137009"/>
        <dbReference type="ChEBI" id="CHEBI:137017"/>
    </reaction>
    <physiologicalReaction direction="left-to-right" evidence="11">
        <dbReference type="Rhea" id="RHEA:53185"/>
    </physiologicalReaction>
</comment>
<comment type="catalytic activity">
    <reaction evidence="1">
        <text>1-hexadecanoyl-sn-glycero-3-phosphoethanolamine + H2O = 1-hexadecanoyl-sn-glycero-3-phosphate + ethanolamine + H(+)</text>
        <dbReference type="Rhea" id="RHEA:53172"/>
        <dbReference type="ChEBI" id="CHEBI:15377"/>
        <dbReference type="ChEBI" id="CHEBI:15378"/>
        <dbReference type="ChEBI" id="CHEBI:57518"/>
        <dbReference type="ChEBI" id="CHEBI:57603"/>
        <dbReference type="ChEBI" id="CHEBI:73004"/>
    </reaction>
    <physiologicalReaction direction="left-to-right" evidence="1">
        <dbReference type="Rhea" id="RHEA:53173"/>
    </physiologicalReaction>
</comment>
<comment type="catalytic activity">
    <reaction evidence="1">
        <text>1-O-hexadecyl-sn-glycero-3-phosphocholine + H2O = 1-O-hexadecyl-sn-glycero-3-phosphate + choline + H(+)</text>
        <dbReference type="Rhea" id="RHEA:41143"/>
        <dbReference type="ChEBI" id="CHEBI:15354"/>
        <dbReference type="ChEBI" id="CHEBI:15377"/>
        <dbReference type="ChEBI" id="CHEBI:15378"/>
        <dbReference type="ChEBI" id="CHEBI:64496"/>
        <dbReference type="ChEBI" id="CHEBI:77580"/>
    </reaction>
    <physiologicalReaction direction="left-to-right" evidence="1">
        <dbReference type="Rhea" id="RHEA:41144"/>
    </physiologicalReaction>
</comment>
<comment type="catalytic activity">
    <reaction evidence="1">
        <text>1-(9Z-octadecenoyl)-sn-glycero-3-phosphocholine + H2O = 1-(9Z-octadecenoyl)-sn-glycero-3-phosphate + choline + H(+)</text>
        <dbReference type="Rhea" id="RHEA:38915"/>
        <dbReference type="ChEBI" id="CHEBI:15354"/>
        <dbReference type="ChEBI" id="CHEBI:15377"/>
        <dbReference type="ChEBI" id="CHEBI:15378"/>
        <dbReference type="ChEBI" id="CHEBI:28610"/>
        <dbReference type="ChEBI" id="CHEBI:74544"/>
    </reaction>
    <physiologicalReaction direction="left-to-right" evidence="1">
        <dbReference type="Rhea" id="RHEA:38916"/>
    </physiologicalReaction>
</comment>
<comment type="catalytic activity">
    <reaction evidence="1">
        <text>N,1-dihexadecanoyl-sn-glycero-3-phosphoethanolamine + H2O = N-hexadecanoylethanolamine + 1-hexadecanoyl-sn-glycero-3-phosphate + H(+)</text>
        <dbReference type="Rhea" id="RHEA:45592"/>
        <dbReference type="ChEBI" id="CHEBI:15377"/>
        <dbReference type="ChEBI" id="CHEBI:15378"/>
        <dbReference type="ChEBI" id="CHEBI:57518"/>
        <dbReference type="ChEBI" id="CHEBI:71464"/>
        <dbReference type="ChEBI" id="CHEBI:85335"/>
    </reaction>
    <physiologicalReaction direction="left-to-right" evidence="1">
        <dbReference type="Rhea" id="RHEA:45593"/>
    </physiologicalReaction>
</comment>
<comment type="catalytic activity">
    <reaction evidence="1">
        <text>1-O-(1Z-octadecenyl)-sn-glycero-3-phospho-(N-5Z,8Z,11Z,14Z-eicosatetraenoyl)-ethanolamine + H2O = 1-O-(1Z-octadecenyl)-sn-glycero-3-phosphate + N-(5Z,8Z,11Z,14Z-eicosatetraenoyl)-ethanolamine + H(+)</text>
        <dbReference type="Rhea" id="RHEA:53192"/>
        <dbReference type="ChEBI" id="CHEBI:2700"/>
        <dbReference type="ChEBI" id="CHEBI:15377"/>
        <dbReference type="ChEBI" id="CHEBI:15378"/>
        <dbReference type="ChEBI" id="CHEBI:137016"/>
        <dbReference type="ChEBI" id="CHEBI:137017"/>
    </reaction>
    <physiologicalReaction direction="left-to-right" evidence="1">
        <dbReference type="Rhea" id="RHEA:53193"/>
    </physiologicalReaction>
</comment>
<comment type="catalytic activity">
    <reaction evidence="1">
        <text>1-O-(1Z-octadecenyl)-sn-glycero-3-phospho-(N-9Z-octadecenoyl)-ethanolamine + H2O = 1-O-(1Z-octadecenyl)-sn-glycero-3-phosphate + N-(9Z-octadecenoyl) ethanolamine + H(+)</text>
        <dbReference type="Rhea" id="RHEA:53188"/>
        <dbReference type="ChEBI" id="CHEBI:15377"/>
        <dbReference type="ChEBI" id="CHEBI:15378"/>
        <dbReference type="ChEBI" id="CHEBI:71466"/>
        <dbReference type="ChEBI" id="CHEBI:137010"/>
        <dbReference type="ChEBI" id="CHEBI:137017"/>
    </reaction>
    <physiologicalReaction direction="left-to-right" evidence="1">
        <dbReference type="Rhea" id="RHEA:53189"/>
    </physiologicalReaction>
</comment>
<comment type="activity regulation">
    <text evidence="1 6">Lysophospholipase D activity is increased by magnesium and manganese and inhibited by calcium in a concentration dependent manner (PubMed:27637550). Loss of lysophospholipase D activity by addition of EDTA (By similarity).</text>
</comment>
<comment type="subcellular location">
    <subcellularLocation>
        <location evidence="4">Cytoplasm</location>
    </subcellularLocation>
    <subcellularLocation>
        <location evidence="10">Membrane</location>
        <topology evidence="2">Multi-pass membrane protein</topology>
    </subcellularLocation>
    <subcellularLocation>
        <location evidence="4">Cytoplasm</location>
        <location evidence="4">Perinuclear region</location>
    </subcellularLocation>
    <subcellularLocation>
        <location evidence="6">Endoplasmic reticulum</location>
    </subcellularLocation>
    <text evidence="4">Concentrated at the perinuclear region and the cell periphery (PubMed:18991142).</text>
</comment>
<comment type="alternative products">
    <event type="alternative splicing"/>
    <isoform>
        <id>Q8N9F7-1</id>
        <name>1</name>
        <sequence type="displayed"/>
    </isoform>
    <isoform>
        <id>Q8N9F7-2</id>
        <name>2</name>
        <sequence type="described" ref="VSP_020807 VSP_020808"/>
    </isoform>
    <isoform>
        <id>Q8N9F7-3</id>
        <name>3</name>
        <name>UGPQ</name>
        <sequence type="described" ref="VSP_020806"/>
    </isoform>
</comment>
<comment type="tissue specificity">
    <text evidence="3 6">Widely expressed with high expression level in testis.</text>
</comment>
<comment type="similarity">
    <text evidence="10">Belongs to the glycerophosphoryl diester phosphodiesterase family.</text>
</comment>